<name>RL24_MYXXD</name>
<protein>
    <recommendedName>
        <fullName evidence="1">Large ribosomal subunit protein uL24</fullName>
    </recommendedName>
    <alternativeName>
        <fullName evidence="2">50S ribosomal protein L24</fullName>
    </alternativeName>
</protein>
<accession>Q1D764</accession>
<comment type="function">
    <text evidence="1">One of two assembly initiator proteins, it binds directly to the 5'-end of the 23S rRNA, where it nucleates assembly of the 50S subunit.</text>
</comment>
<comment type="function">
    <text evidence="1">One of the proteins that surrounds the polypeptide exit tunnel on the outside of the subunit.</text>
</comment>
<comment type="subunit">
    <text evidence="1">Part of the 50S ribosomal subunit.</text>
</comment>
<comment type="similarity">
    <text evidence="1">Belongs to the universal ribosomal protein uL24 family.</text>
</comment>
<evidence type="ECO:0000255" key="1">
    <source>
        <dbReference type="HAMAP-Rule" id="MF_01326"/>
    </source>
</evidence>
<evidence type="ECO:0000305" key="2"/>
<feature type="chain" id="PRO_1000067584" description="Large ribosomal subunit protein uL24">
    <location>
        <begin position="1"/>
        <end position="111"/>
    </location>
</feature>
<proteinExistence type="inferred from homology"/>
<reference key="1">
    <citation type="journal article" date="2006" name="Proc. Natl. Acad. Sci. U.S.A.">
        <title>Evolution of sensory complexity recorded in a myxobacterial genome.</title>
        <authorList>
            <person name="Goldman B.S."/>
            <person name="Nierman W.C."/>
            <person name="Kaiser D."/>
            <person name="Slater S.C."/>
            <person name="Durkin A.S."/>
            <person name="Eisen J.A."/>
            <person name="Ronning C.M."/>
            <person name="Barbazuk W.B."/>
            <person name="Blanchard M."/>
            <person name="Field C."/>
            <person name="Halling C."/>
            <person name="Hinkle G."/>
            <person name="Iartchuk O."/>
            <person name="Kim H.S."/>
            <person name="Mackenzie C."/>
            <person name="Madupu R."/>
            <person name="Miller N."/>
            <person name="Shvartsbeyn A."/>
            <person name="Sullivan S.A."/>
            <person name="Vaudin M."/>
            <person name="Wiegand R."/>
            <person name="Kaplan H.B."/>
        </authorList>
    </citation>
    <scope>NUCLEOTIDE SEQUENCE [LARGE SCALE GENOMIC DNA]</scope>
    <source>
        <strain>DK1622</strain>
    </source>
</reference>
<gene>
    <name evidence="1" type="primary">rplX</name>
    <name type="ordered locus">MXAN_3310</name>
</gene>
<dbReference type="EMBL" id="CP000113">
    <property type="protein sequence ID" value="ABF92246.1"/>
    <property type="molecule type" value="Genomic_DNA"/>
</dbReference>
<dbReference type="RefSeq" id="WP_011553346.1">
    <property type="nucleotide sequence ID" value="NC_008095.1"/>
</dbReference>
<dbReference type="SMR" id="Q1D764"/>
<dbReference type="STRING" id="246197.MXAN_3310"/>
<dbReference type="EnsemblBacteria" id="ABF92246">
    <property type="protein sequence ID" value="ABF92246"/>
    <property type="gene ID" value="MXAN_3310"/>
</dbReference>
<dbReference type="GeneID" id="41360663"/>
<dbReference type="KEGG" id="mxa:MXAN_3310"/>
<dbReference type="eggNOG" id="COG0198">
    <property type="taxonomic scope" value="Bacteria"/>
</dbReference>
<dbReference type="HOGENOM" id="CLU_093315_2_0_7"/>
<dbReference type="OrthoDB" id="9807419at2"/>
<dbReference type="Proteomes" id="UP000002402">
    <property type="component" value="Chromosome"/>
</dbReference>
<dbReference type="GO" id="GO:1990904">
    <property type="term" value="C:ribonucleoprotein complex"/>
    <property type="evidence" value="ECO:0007669"/>
    <property type="project" value="UniProtKB-KW"/>
</dbReference>
<dbReference type="GO" id="GO:0005840">
    <property type="term" value="C:ribosome"/>
    <property type="evidence" value="ECO:0007669"/>
    <property type="project" value="UniProtKB-KW"/>
</dbReference>
<dbReference type="GO" id="GO:0019843">
    <property type="term" value="F:rRNA binding"/>
    <property type="evidence" value="ECO:0007669"/>
    <property type="project" value="UniProtKB-UniRule"/>
</dbReference>
<dbReference type="GO" id="GO:0003735">
    <property type="term" value="F:structural constituent of ribosome"/>
    <property type="evidence" value="ECO:0007669"/>
    <property type="project" value="InterPro"/>
</dbReference>
<dbReference type="GO" id="GO:0006412">
    <property type="term" value="P:translation"/>
    <property type="evidence" value="ECO:0007669"/>
    <property type="project" value="UniProtKB-UniRule"/>
</dbReference>
<dbReference type="CDD" id="cd06089">
    <property type="entry name" value="KOW_RPL26"/>
    <property type="match status" value="1"/>
</dbReference>
<dbReference type="Gene3D" id="2.30.30.30">
    <property type="match status" value="1"/>
</dbReference>
<dbReference type="HAMAP" id="MF_01326_B">
    <property type="entry name" value="Ribosomal_uL24_B"/>
    <property type="match status" value="1"/>
</dbReference>
<dbReference type="InterPro" id="IPR014722">
    <property type="entry name" value="Rib_uL2_dom2"/>
</dbReference>
<dbReference type="InterPro" id="IPR003256">
    <property type="entry name" value="Ribosomal_uL24"/>
</dbReference>
<dbReference type="InterPro" id="IPR041988">
    <property type="entry name" value="Ribosomal_uL24_KOW"/>
</dbReference>
<dbReference type="InterPro" id="IPR008991">
    <property type="entry name" value="Translation_prot_SH3-like_sf"/>
</dbReference>
<dbReference type="NCBIfam" id="TIGR01079">
    <property type="entry name" value="rplX_bact"/>
    <property type="match status" value="1"/>
</dbReference>
<dbReference type="PANTHER" id="PTHR12903">
    <property type="entry name" value="MITOCHONDRIAL RIBOSOMAL PROTEIN L24"/>
    <property type="match status" value="1"/>
</dbReference>
<dbReference type="Pfam" id="PF17136">
    <property type="entry name" value="ribosomal_L24"/>
    <property type="match status" value="1"/>
</dbReference>
<dbReference type="SUPFAM" id="SSF50104">
    <property type="entry name" value="Translation proteins SH3-like domain"/>
    <property type="match status" value="1"/>
</dbReference>
<keyword id="KW-1185">Reference proteome</keyword>
<keyword id="KW-0687">Ribonucleoprotein</keyword>
<keyword id="KW-0689">Ribosomal protein</keyword>
<keyword id="KW-0694">RNA-binding</keyword>
<keyword id="KW-0699">rRNA-binding</keyword>
<organism>
    <name type="scientific">Myxococcus xanthus (strain DK1622)</name>
    <dbReference type="NCBI Taxonomy" id="246197"/>
    <lineage>
        <taxon>Bacteria</taxon>
        <taxon>Pseudomonadati</taxon>
        <taxon>Myxococcota</taxon>
        <taxon>Myxococcia</taxon>
        <taxon>Myxococcales</taxon>
        <taxon>Cystobacterineae</taxon>
        <taxon>Myxococcaceae</taxon>
        <taxon>Myxococcus</taxon>
    </lineage>
</organism>
<sequence>MQKLKVGDTIQVMAGAEASEKNPATKRGKVLKIDREAERVTVEGLRLVKRHMKKTPQSPEGGIVEKPGTIALANVQVVCAKCDKPTRVGIRTEGEEGKKKRFCKNCDALID</sequence>